<feature type="chain" id="PRO_0000293393" description="Small ribosomal subunit protein uS4">
    <location>
        <begin position="1"/>
        <end position="202"/>
    </location>
</feature>
<feature type="domain" description="S4 RNA-binding" evidence="1">
    <location>
        <begin position="90"/>
        <end position="152"/>
    </location>
</feature>
<feature type="region of interest" description="Disordered" evidence="2">
    <location>
        <begin position="22"/>
        <end position="43"/>
    </location>
</feature>
<proteinExistence type="inferred from homology"/>
<gene>
    <name evidence="1" type="primary">rpsD</name>
    <name evidence="1" type="synonym">rps4</name>
    <name type="ordered locus">Tery_0324</name>
</gene>
<sequence>MSRYRGPRLRIVRRLGDLPGLTRKSARRAYPPGQHGQNRRKRSEYAIRLEEKQKLLYNYGVCERQLLRYVKKARRAGGSTGKVLLELLEMRLDNTVFRLGMAPTIPSARQLVNHGHVTVNGKVVSIASYQCKPGEVISVKEKEKSKEMVKTNLQYPGLANIPSHLEFDKNKLVGKVNGIVEREWVALQINELLIVEYYSRQA</sequence>
<protein>
    <recommendedName>
        <fullName evidence="1">Small ribosomal subunit protein uS4</fullName>
    </recommendedName>
    <alternativeName>
        <fullName evidence="3">30S ribosomal protein S4</fullName>
    </alternativeName>
</protein>
<evidence type="ECO:0000255" key="1">
    <source>
        <dbReference type="HAMAP-Rule" id="MF_01306"/>
    </source>
</evidence>
<evidence type="ECO:0000256" key="2">
    <source>
        <dbReference type="SAM" id="MobiDB-lite"/>
    </source>
</evidence>
<evidence type="ECO:0000305" key="3"/>
<reference key="1">
    <citation type="journal article" date="2015" name="Proc. Natl. Acad. Sci. U.S.A.">
        <title>Trichodesmium genome maintains abundant, widespread noncoding DNA in situ, despite oligotrophic lifestyle.</title>
        <authorList>
            <person name="Walworth N."/>
            <person name="Pfreundt U."/>
            <person name="Nelson W.C."/>
            <person name="Mincer T."/>
            <person name="Heidelberg J.F."/>
            <person name="Fu F."/>
            <person name="Waterbury J.B."/>
            <person name="Glavina del Rio T."/>
            <person name="Goodwin L."/>
            <person name="Kyrpides N.C."/>
            <person name="Land M.L."/>
            <person name="Woyke T."/>
            <person name="Hutchins D.A."/>
            <person name="Hess W.R."/>
            <person name="Webb E.A."/>
        </authorList>
    </citation>
    <scope>NUCLEOTIDE SEQUENCE [LARGE SCALE GENOMIC DNA]</scope>
    <source>
        <strain>IMS101</strain>
    </source>
</reference>
<keyword id="KW-0687">Ribonucleoprotein</keyword>
<keyword id="KW-0689">Ribosomal protein</keyword>
<keyword id="KW-0694">RNA-binding</keyword>
<keyword id="KW-0699">rRNA-binding</keyword>
<organism>
    <name type="scientific">Trichodesmium erythraeum (strain IMS101)</name>
    <dbReference type="NCBI Taxonomy" id="203124"/>
    <lineage>
        <taxon>Bacteria</taxon>
        <taxon>Bacillati</taxon>
        <taxon>Cyanobacteriota</taxon>
        <taxon>Cyanophyceae</taxon>
        <taxon>Oscillatoriophycideae</taxon>
        <taxon>Oscillatoriales</taxon>
        <taxon>Microcoleaceae</taxon>
        <taxon>Trichodesmium</taxon>
    </lineage>
</organism>
<dbReference type="EMBL" id="CP000393">
    <property type="protein sequence ID" value="ABG49799.1"/>
    <property type="molecule type" value="Genomic_DNA"/>
</dbReference>
<dbReference type="RefSeq" id="WP_011610195.1">
    <property type="nucleotide sequence ID" value="NC_008312.1"/>
</dbReference>
<dbReference type="SMR" id="Q119M5"/>
<dbReference type="STRING" id="203124.Tery_0324"/>
<dbReference type="KEGG" id="ter:Tery_0324"/>
<dbReference type="eggNOG" id="COG0522">
    <property type="taxonomic scope" value="Bacteria"/>
</dbReference>
<dbReference type="HOGENOM" id="CLU_092403_0_5_3"/>
<dbReference type="OrthoDB" id="9803672at2"/>
<dbReference type="GO" id="GO:0015935">
    <property type="term" value="C:small ribosomal subunit"/>
    <property type="evidence" value="ECO:0007669"/>
    <property type="project" value="InterPro"/>
</dbReference>
<dbReference type="GO" id="GO:0019843">
    <property type="term" value="F:rRNA binding"/>
    <property type="evidence" value="ECO:0007669"/>
    <property type="project" value="UniProtKB-UniRule"/>
</dbReference>
<dbReference type="GO" id="GO:0003735">
    <property type="term" value="F:structural constituent of ribosome"/>
    <property type="evidence" value="ECO:0007669"/>
    <property type="project" value="InterPro"/>
</dbReference>
<dbReference type="GO" id="GO:0042274">
    <property type="term" value="P:ribosomal small subunit biogenesis"/>
    <property type="evidence" value="ECO:0007669"/>
    <property type="project" value="TreeGrafter"/>
</dbReference>
<dbReference type="GO" id="GO:0006412">
    <property type="term" value="P:translation"/>
    <property type="evidence" value="ECO:0007669"/>
    <property type="project" value="UniProtKB-UniRule"/>
</dbReference>
<dbReference type="CDD" id="cd00165">
    <property type="entry name" value="S4"/>
    <property type="match status" value="1"/>
</dbReference>
<dbReference type="FunFam" id="3.10.290.10:FF:000001">
    <property type="entry name" value="30S ribosomal protein S4"/>
    <property type="match status" value="1"/>
</dbReference>
<dbReference type="FunFam" id="1.10.1050.10:FF:000002">
    <property type="entry name" value="30S ribosomal protein S4, chloroplastic"/>
    <property type="match status" value="1"/>
</dbReference>
<dbReference type="Gene3D" id="1.10.1050.10">
    <property type="entry name" value="Ribosomal Protein S4 Delta 41, Chain A, domain 1"/>
    <property type="match status" value="1"/>
</dbReference>
<dbReference type="Gene3D" id="3.10.290.10">
    <property type="entry name" value="RNA-binding S4 domain"/>
    <property type="match status" value="1"/>
</dbReference>
<dbReference type="HAMAP" id="MF_01306_B">
    <property type="entry name" value="Ribosomal_uS4_B"/>
    <property type="match status" value="1"/>
</dbReference>
<dbReference type="InterPro" id="IPR022801">
    <property type="entry name" value="Ribosomal_uS4"/>
</dbReference>
<dbReference type="InterPro" id="IPR005709">
    <property type="entry name" value="Ribosomal_uS4_bac-type"/>
</dbReference>
<dbReference type="InterPro" id="IPR018079">
    <property type="entry name" value="Ribosomal_uS4_CS"/>
</dbReference>
<dbReference type="InterPro" id="IPR001912">
    <property type="entry name" value="Ribosomal_uS4_N"/>
</dbReference>
<dbReference type="InterPro" id="IPR002942">
    <property type="entry name" value="S4_RNA-bd"/>
</dbReference>
<dbReference type="InterPro" id="IPR036986">
    <property type="entry name" value="S4_RNA-bd_sf"/>
</dbReference>
<dbReference type="NCBIfam" id="NF003717">
    <property type="entry name" value="PRK05327.1"/>
    <property type="match status" value="1"/>
</dbReference>
<dbReference type="NCBIfam" id="TIGR01017">
    <property type="entry name" value="rpsD_bact"/>
    <property type="match status" value="1"/>
</dbReference>
<dbReference type="PANTHER" id="PTHR11831">
    <property type="entry name" value="30S 40S RIBOSOMAL PROTEIN"/>
    <property type="match status" value="1"/>
</dbReference>
<dbReference type="PANTHER" id="PTHR11831:SF4">
    <property type="entry name" value="SMALL RIBOSOMAL SUBUNIT PROTEIN US4M"/>
    <property type="match status" value="1"/>
</dbReference>
<dbReference type="Pfam" id="PF00163">
    <property type="entry name" value="Ribosomal_S4"/>
    <property type="match status" value="1"/>
</dbReference>
<dbReference type="Pfam" id="PF01479">
    <property type="entry name" value="S4"/>
    <property type="match status" value="1"/>
</dbReference>
<dbReference type="SMART" id="SM01390">
    <property type="entry name" value="Ribosomal_S4"/>
    <property type="match status" value="1"/>
</dbReference>
<dbReference type="SMART" id="SM00363">
    <property type="entry name" value="S4"/>
    <property type="match status" value="1"/>
</dbReference>
<dbReference type="SUPFAM" id="SSF55174">
    <property type="entry name" value="Alpha-L RNA-binding motif"/>
    <property type="match status" value="1"/>
</dbReference>
<dbReference type="PROSITE" id="PS00632">
    <property type="entry name" value="RIBOSOMAL_S4"/>
    <property type="match status" value="1"/>
</dbReference>
<dbReference type="PROSITE" id="PS50889">
    <property type="entry name" value="S4"/>
    <property type="match status" value="1"/>
</dbReference>
<accession>Q119M5</accession>
<name>RS4_TRIEI</name>
<comment type="function">
    <text evidence="1">One of the primary rRNA binding proteins, it binds directly to 16S rRNA where it nucleates assembly of the body of the 30S subunit.</text>
</comment>
<comment type="function">
    <text evidence="1">With S5 and S12 plays an important role in translational accuracy.</text>
</comment>
<comment type="subunit">
    <text evidence="1">Part of the 30S ribosomal subunit. Contacts protein S5. The interaction surface between S4 and S5 is involved in control of translational fidelity.</text>
</comment>
<comment type="similarity">
    <text evidence="1">Belongs to the universal ribosomal protein uS4 family.</text>
</comment>